<name>CLPB_SHEON</name>
<reference key="1">
    <citation type="journal article" date="2002" name="Nat. Biotechnol.">
        <title>Genome sequence of the dissimilatory metal ion-reducing bacterium Shewanella oneidensis.</title>
        <authorList>
            <person name="Heidelberg J.F."/>
            <person name="Paulsen I.T."/>
            <person name="Nelson K.E."/>
            <person name="Gaidos E.J."/>
            <person name="Nelson W.C."/>
            <person name="Read T.D."/>
            <person name="Eisen J.A."/>
            <person name="Seshadri R."/>
            <person name="Ward N.L."/>
            <person name="Methe B.A."/>
            <person name="Clayton R.A."/>
            <person name="Meyer T."/>
            <person name="Tsapin A."/>
            <person name="Scott J."/>
            <person name="Beanan M.J."/>
            <person name="Brinkac L.M."/>
            <person name="Daugherty S.C."/>
            <person name="DeBoy R.T."/>
            <person name="Dodson R.J."/>
            <person name="Durkin A.S."/>
            <person name="Haft D.H."/>
            <person name="Kolonay J.F."/>
            <person name="Madupu R."/>
            <person name="Peterson J.D."/>
            <person name="Umayam L.A."/>
            <person name="White O."/>
            <person name="Wolf A.M."/>
            <person name="Vamathevan J.J."/>
            <person name="Weidman J.F."/>
            <person name="Impraim M."/>
            <person name="Lee K."/>
            <person name="Berry K.J."/>
            <person name="Lee C."/>
            <person name="Mueller J."/>
            <person name="Khouri H.M."/>
            <person name="Gill J."/>
            <person name="Utterback T.R."/>
            <person name="McDonald L.A."/>
            <person name="Feldblyum T.V."/>
            <person name="Smith H.O."/>
            <person name="Venter J.C."/>
            <person name="Nealson K.H."/>
            <person name="Fraser C.M."/>
        </authorList>
    </citation>
    <scope>NUCLEOTIDE SEQUENCE [LARGE SCALE GENOMIC DNA]</scope>
    <source>
        <strain>ATCC 700550 / JCM 31522 / CIP 106686 / LMG 19005 / NCIMB 14063 / MR-1</strain>
    </source>
</reference>
<evidence type="ECO:0000250" key="1"/>
<evidence type="ECO:0000255" key="2">
    <source>
        <dbReference type="PROSITE-ProRule" id="PRU01251"/>
    </source>
</evidence>
<evidence type="ECO:0000305" key="3"/>
<keyword id="KW-0067">ATP-binding</keyword>
<keyword id="KW-0143">Chaperone</keyword>
<keyword id="KW-0175">Coiled coil</keyword>
<keyword id="KW-0963">Cytoplasm</keyword>
<keyword id="KW-0547">Nucleotide-binding</keyword>
<keyword id="KW-1185">Reference proteome</keyword>
<keyword id="KW-0677">Repeat</keyword>
<keyword id="KW-0346">Stress response</keyword>
<feature type="chain" id="PRO_0000191173" description="Chaperone protein ClpB">
    <location>
        <begin position="1"/>
        <end position="857"/>
    </location>
</feature>
<feature type="domain" description="Clp R" evidence="2">
    <location>
        <begin position="3"/>
        <end position="146"/>
    </location>
</feature>
<feature type="region of interest" description="Repeat 1" evidence="2">
    <location>
        <begin position="6"/>
        <end position="71"/>
    </location>
</feature>
<feature type="region of interest" description="Repeat 2" evidence="2">
    <location>
        <begin position="83"/>
        <end position="146"/>
    </location>
</feature>
<feature type="region of interest" description="NBD1" evidence="1">
    <location>
        <begin position="159"/>
        <end position="340"/>
    </location>
</feature>
<feature type="region of interest" description="Linker" evidence="1">
    <location>
        <begin position="341"/>
        <end position="545"/>
    </location>
</feature>
<feature type="region of interest" description="NBD2" evidence="1">
    <location>
        <begin position="555"/>
        <end position="765"/>
    </location>
</feature>
<feature type="region of interest" description="C-terminal" evidence="1">
    <location>
        <begin position="766"/>
        <end position="857"/>
    </location>
</feature>
<feature type="coiled-coil region" evidence="1">
    <location>
        <begin position="391"/>
        <end position="525"/>
    </location>
</feature>
<feature type="binding site" evidence="1">
    <location>
        <begin position="206"/>
        <end position="213"/>
    </location>
    <ligand>
        <name>ATP</name>
        <dbReference type="ChEBI" id="CHEBI:30616"/>
        <label>1</label>
    </ligand>
</feature>
<feature type="binding site" evidence="1">
    <location>
        <begin position="605"/>
        <end position="612"/>
    </location>
    <ligand>
        <name>ATP</name>
        <dbReference type="ChEBI" id="CHEBI:30616"/>
        <label>2</label>
    </ligand>
</feature>
<accession>Q8EBE6</accession>
<sequence>MRLDRMTNKFQLAISDAQSLALGRDHQFIEPLHLMMALLNQDSGSIHPLLTQAGIRVSALRSLLSQELERLPQVEGTGGDVQLSQGLIRLLNLCDKLAQKRKDKYISSELFVLAALEGCDALAQCLKKSGATKELMEQTIEQVRGGQKVDDPNAEDQRQALKKFTVDLTERAEQGKLDPVIGRDDEIRRTIQVLQRRTKNNPVLIGEPGVGKTAIVEGLAQRIVNGEVPEGIKNKRVLSLDMGALIAGAKYRGEFEERLKAVLNELAQEEGQVILFIDELHTMVGAGKGDGAMDAGNMLKPALARGDLHCVGATTLDEYRQYIEKDAALERRFQKVLVDEPSVEDTIAILRGLKERYELHHHVEITDPAIVAAATMSHRYVSDRKLPDKAIDLIDEAASSIRMQMDSKPESLDRLERRAIQLKLEEQALAKENDEASRRRLDHLQEELRDVEAKASELSEIWRTEKAALAGTQHIKADLEQARLDLEVARRAGDLTRMSELQYGRIPELEKQLDLASQAEMQDMTLLRNKVTDLEIAEVLSKATGIPVSKMLEGEREKLLQMEVALHERVIGQNEAVDAVANAIRRSRAGLADPNRPIGSFLFLGPTGVGKTELCKSLARFLFDSESALVRIDMSEFMEKHAVSRLVGAPPGYVGYEEGGYLTEAVRRKPYSVILLDEVEKAHPDVFNILLQVLDDGRLTDGQGRTVDFRNTVIIMTSNLGSDIIQEGFGHLSYSEMKSAVMNVVTHSFRPEFLNRIDESVVFHPLDAENIKHIASIQIASLRKRLAEKDYTLEITDEALSLIAEIGFDPVYGARPLKRALQQEMENPLAQKLLRGDLLPGKPIKVSCVDGELVFEQ</sequence>
<dbReference type="EMBL" id="AE014299">
    <property type="protein sequence ID" value="AAN56566.1"/>
    <property type="molecule type" value="Genomic_DNA"/>
</dbReference>
<dbReference type="RefSeq" id="NP_719122.1">
    <property type="nucleotide sequence ID" value="NC_004347.2"/>
</dbReference>
<dbReference type="RefSeq" id="WP_011073398.1">
    <property type="nucleotide sequence ID" value="NC_004347.2"/>
</dbReference>
<dbReference type="SMR" id="Q8EBE6"/>
<dbReference type="STRING" id="211586.SO_3577"/>
<dbReference type="PaxDb" id="211586-SO_3577"/>
<dbReference type="KEGG" id="son:SO_3577"/>
<dbReference type="PATRIC" id="fig|211586.12.peg.3473"/>
<dbReference type="eggNOG" id="COG0542">
    <property type="taxonomic scope" value="Bacteria"/>
</dbReference>
<dbReference type="HOGENOM" id="CLU_005070_4_1_6"/>
<dbReference type="OrthoDB" id="9803641at2"/>
<dbReference type="PhylomeDB" id="Q8EBE6"/>
<dbReference type="BioCyc" id="SONE211586:G1GMP-3335-MONOMER"/>
<dbReference type="Proteomes" id="UP000008186">
    <property type="component" value="Chromosome"/>
</dbReference>
<dbReference type="GO" id="GO:0005737">
    <property type="term" value="C:cytoplasm"/>
    <property type="evidence" value="ECO:0000318"/>
    <property type="project" value="GO_Central"/>
</dbReference>
<dbReference type="GO" id="GO:0005524">
    <property type="term" value="F:ATP binding"/>
    <property type="evidence" value="ECO:0007669"/>
    <property type="project" value="UniProtKB-KW"/>
</dbReference>
<dbReference type="GO" id="GO:0016887">
    <property type="term" value="F:ATP hydrolysis activity"/>
    <property type="evidence" value="ECO:0000318"/>
    <property type="project" value="GO_Central"/>
</dbReference>
<dbReference type="GO" id="GO:0034605">
    <property type="term" value="P:cellular response to heat"/>
    <property type="evidence" value="ECO:0000318"/>
    <property type="project" value="GO_Central"/>
</dbReference>
<dbReference type="GO" id="GO:0042026">
    <property type="term" value="P:protein refolding"/>
    <property type="evidence" value="ECO:0007669"/>
    <property type="project" value="InterPro"/>
</dbReference>
<dbReference type="CDD" id="cd00009">
    <property type="entry name" value="AAA"/>
    <property type="match status" value="1"/>
</dbReference>
<dbReference type="CDD" id="cd19499">
    <property type="entry name" value="RecA-like_ClpB_Hsp104-like"/>
    <property type="match status" value="1"/>
</dbReference>
<dbReference type="FunFam" id="1.10.1780.10:FF:000003">
    <property type="entry name" value="ATP-dependent chaperone ClpB"/>
    <property type="match status" value="1"/>
</dbReference>
<dbReference type="FunFam" id="1.10.8.60:FF:000017">
    <property type="entry name" value="ATP-dependent chaperone ClpB"/>
    <property type="match status" value="1"/>
</dbReference>
<dbReference type="FunFam" id="3.40.50.300:FF:000120">
    <property type="entry name" value="ATP-dependent chaperone ClpB"/>
    <property type="match status" value="1"/>
</dbReference>
<dbReference type="FunFam" id="3.40.50.300:FF:000025">
    <property type="entry name" value="ATP-dependent Clp protease subunit"/>
    <property type="match status" value="1"/>
</dbReference>
<dbReference type="FunFam" id="3.40.50.300:FF:000010">
    <property type="entry name" value="Chaperone clpB 1, putative"/>
    <property type="match status" value="1"/>
</dbReference>
<dbReference type="Gene3D" id="1.10.8.60">
    <property type="match status" value="1"/>
</dbReference>
<dbReference type="Gene3D" id="1.10.1780.10">
    <property type="entry name" value="Clp, N-terminal domain"/>
    <property type="match status" value="1"/>
</dbReference>
<dbReference type="Gene3D" id="3.40.50.300">
    <property type="entry name" value="P-loop containing nucleotide triphosphate hydrolases"/>
    <property type="match status" value="3"/>
</dbReference>
<dbReference type="InterPro" id="IPR003593">
    <property type="entry name" value="AAA+_ATPase"/>
</dbReference>
<dbReference type="InterPro" id="IPR003959">
    <property type="entry name" value="ATPase_AAA_core"/>
</dbReference>
<dbReference type="InterPro" id="IPR017730">
    <property type="entry name" value="Chaperonin_ClpB"/>
</dbReference>
<dbReference type="InterPro" id="IPR019489">
    <property type="entry name" value="Clp_ATPase_C"/>
</dbReference>
<dbReference type="InterPro" id="IPR036628">
    <property type="entry name" value="Clp_N_dom_sf"/>
</dbReference>
<dbReference type="InterPro" id="IPR004176">
    <property type="entry name" value="Clp_R_dom"/>
</dbReference>
<dbReference type="InterPro" id="IPR001270">
    <property type="entry name" value="ClpA/B"/>
</dbReference>
<dbReference type="InterPro" id="IPR018368">
    <property type="entry name" value="ClpA/B_CS1"/>
</dbReference>
<dbReference type="InterPro" id="IPR028299">
    <property type="entry name" value="ClpA/B_CS2"/>
</dbReference>
<dbReference type="InterPro" id="IPR041546">
    <property type="entry name" value="ClpA/ClpB_AAA_lid"/>
</dbReference>
<dbReference type="InterPro" id="IPR050130">
    <property type="entry name" value="ClpA_ClpB"/>
</dbReference>
<dbReference type="InterPro" id="IPR027417">
    <property type="entry name" value="P-loop_NTPase"/>
</dbReference>
<dbReference type="NCBIfam" id="TIGR03346">
    <property type="entry name" value="chaperone_ClpB"/>
    <property type="match status" value="1"/>
</dbReference>
<dbReference type="NCBIfam" id="NF008118">
    <property type="entry name" value="PRK10865.1"/>
    <property type="match status" value="1"/>
</dbReference>
<dbReference type="PANTHER" id="PTHR11638">
    <property type="entry name" value="ATP-DEPENDENT CLP PROTEASE"/>
    <property type="match status" value="1"/>
</dbReference>
<dbReference type="PANTHER" id="PTHR11638:SF18">
    <property type="entry name" value="HEAT SHOCK PROTEIN 104"/>
    <property type="match status" value="1"/>
</dbReference>
<dbReference type="Pfam" id="PF00004">
    <property type="entry name" value="AAA"/>
    <property type="match status" value="1"/>
</dbReference>
<dbReference type="Pfam" id="PF07724">
    <property type="entry name" value="AAA_2"/>
    <property type="match status" value="1"/>
</dbReference>
<dbReference type="Pfam" id="PF17871">
    <property type="entry name" value="AAA_lid_9"/>
    <property type="match status" value="1"/>
</dbReference>
<dbReference type="Pfam" id="PF02861">
    <property type="entry name" value="Clp_N"/>
    <property type="match status" value="2"/>
</dbReference>
<dbReference type="Pfam" id="PF10431">
    <property type="entry name" value="ClpB_D2-small"/>
    <property type="match status" value="1"/>
</dbReference>
<dbReference type="PRINTS" id="PR00300">
    <property type="entry name" value="CLPPROTEASEA"/>
</dbReference>
<dbReference type="SMART" id="SM00382">
    <property type="entry name" value="AAA"/>
    <property type="match status" value="2"/>
</dbReference>
<dbReference type="SMART" id="SM01086">
    <property type="entry name" value="ClpB_D2-small"/>
    <property type="match status" value="1"/>
</dbReference>
<dbReference type="SUPFAM" id="SSF81923">
    <property type="entry name" value="Double Clp-N motif"/>
    <property type="match status" value="1"/>
</dbReference>
<dbReference type="SUPFAM" id="SSF52540">
    <property type="entry name" value="P-loop containing nucleoside triphosphate hydrolases"/>
    <property type="match status" value="2"/>
</dbReference>
<dbReference type="PROSITE" id="PS51903">
    <property type="entry name" value="CLP_R"/>
    <property type="match status" value="1"/>
</dbReference>
<dbReference type="PROSITE" id="PS00870">
    <property type="entry name" value="CLPAB_1"/>
    <property type="match status" value="1"/>
</dbReference>
<dbReference type="PROSITE" id="PS00871">
    <property type="entry name" value="CLPAB_2"/>
    <property type="match status" value="1"/>
</dbReference>
<protein>
    <recommendedName>
        <fullName>Chaperone protein ClpB</fullName>
    </recommendedName>
</protein>
<proteinExistence type="inferred from homology"/>
<organism>
    <name type="scientific">Shewanella oneidensis (strain ATCC 700550 / JCM 31522 / CIP 106686 / LMG 19005 / NCIMB 14063 / MR-1)</name>
    <dbReference type="NCBI Taxonomy" id="211586"/>
    <lineage>
        <taxon>Bacteria</taxon>
        <taxon>Pseudomonadati</taxon>
        <taxon>Pseudomonadota</taxon>
        <taxon>Gammaproteobacteria</taxon>
        <taxon>Alteromonadales</taxon>
        <taxon>Shewanellaceae</taxon>
        <taxon>Shewanella</taxon>
    </lineage>
</organism>
<comment type="function">
    <text evidence="1">Part of a stress-induced multi-chaperone system, it is involved in the recovery of the cell from heat-induced damage, in cooperation with DnaK, DnaJ and GrpE. Acts before DnaK, in the processing of protein aggregates. Protein binding stimulates the ATPase activity; ATP hydrolysis unfolds the denatured protein aggregates, which probably helps expose new hydrophobic binding sites on the surface of ClpB-bound aggregates, contributing to the solubilization and refolding of denatured protein aggregates by DnaK (By similarity).</text>
</comment>
<comment type="subunit">
    <text evidence="1">Homohexamer. The oligomerization is ATP-dependent (By similarity).</text>
</comment>
<comment type="subcellular location">
    <subcellularLocation>
        <location evidence="3">Cytoplasm</location>
    </subcellularLocation>
</comment>
<comment type="domain">
    <text evidence="1">The Clp repeat (R) domain probably functions as a substrate-discriminating domain, recruiting aggregated proteins to the ClpB hexamer and/or stabilizing bound proteins. The NBD2 domain is responsible for oligomerization, whereas the NBD1 domain stabilizes the hexamer probably in an ATP-dependent manner. The movement of the coiled-coil domain is essential for ClpB ability to rescue proteins from an aggregated state, probably by pulling apart large aggregated proteins, which are bound between the coiled-coils motifs of adjacent ClpB subunits in the functional hexamer (By similarity).</text>
</comment>
<comment type="similarity">
    <text evidence="3">Belongs to the ClpA/ClpB family.</text>
</comment>
<gene>
    <name type="primary">clpB</name>
    <name type="ordered locus">SO_3577</name>
</gene>